<accession>A1RII6</accession>
<reference key="1">
    <citation type="submission" date="2006-12" db="EMBL/GenBank/DDBJ databases">
        <title>Complete sequence of Shewanella sp. W3-18-1.</title>
        <authorList>
            <consortium name="US DOE Joint Genome Institute"/>
            <person name="Copeland A."/>
            <person name="Lucas S."/>
            <person name="Lapidus A."/>
            <person name="Barry K."/>
            <person name="Detter J.C."/>
            <person name="Glavina del Rio T."/>
            <person name="Hammon N."/>
            <person name="Israni S."/>
            <person name="Dalin E."/>
            <person name="Tice H."/>
            <person name="Pitluck S."/>
            <person name="Chain P."/>
            <person name="Malfatti S."/>
            <person name="Shin M."/>
            <person name="Vergez L."/>
            <person name="Schmutz J."/>
            <person name="Larimer F."/>
            <person name="Land M."/>
            <person name="Hauser L."/>
            <person name="Kyrpides N."/>
            <person name="Lykidis A."/>
            <person name="Tiedje J."/>
            <person name="Richardson P."/>
        </authorList>
    </citation>
    <scope>NUCLEOTIDE SEQUENCE [LARGE SCALE GENOMIC DNA]</scope>
    <source>
        <strain>W3-18-1</strain>
    </source>
</reference>
<gene>
    <name evidence="1" type="primary">zipA</name>
    <name type="ordered locus">Sputw3181_1644</name>
</gene>
<organism>
    <name type="scientific">Shewanella sp. (strain W3-18-1)</name>
    <dbReference type="NCBI Taxonomy" id="351745"/>
    <lineage>
        <taxon>Bacteria</taxon>
        <taxon>Pseudomonadati</taxon>
        <taxon>Pseudomonadota</taxon>
        <taxon>Gammaproteobacteria</taxon>
        <taxon>Alteromonadales</taxon>
        <taxon>Shewanellaceae</taxon>
        <taxon>Shewanella</taxon>
    </lineage>
</organism>
<name>ZIPA_SHESW</name>
<evidence type="ECO:0000255" key="1">
    <source>
        <dbReference type="HAMAP-Rule" id="MF_00509"/>
    </source>
</evidence>
<evidence type="ECO:0000256" key="2">
    <source>
        <dbReference type="SAM" id="MobiDB-lite"/>
    </source>
</evidence>
<feature type="chain" id="PRO_1000015161" description="Cell division protein ZipA">
    <location>
        <begin position="1"/>
        <end position="342"/>
    </location>
</feature>
<feature type="topological domain" description="Periplasmic" evidence="1">
    <location>
        <begin position="1"/>
        <end position="6"/>
    </location>
</feature>
<feature type="transmembrane region" description="Helical" evidence="1">
    <location>
        <begin position="7"/>
        <end position="27"/>
    </location>
</feature>
<feature type="topological domain" description="Cytoplasmic" evidence="1">
    <location>
        <begin position="28"/>
        <end position="342"/>
    </location>
</feature>
<feature type="region of interest" description="Disordered" evidence="2">
    <location>
        <begin position="33"/>
        <end position="57"/>
    </location>
</feature>
<feature type="compositionally biased region" description="Basic and acidic residues" evidence="2">
    <location>
        <begin position="47"/>
        <end position="57"/>
    </location>
</feature>
<sequence>MEDLQLVLFILGAIAIVAVLVHGFWSIRRQQPKSLKDSPMGNFYKQQADKESPPKRVDADGFDADGIGAVRVRKVGESNPHETPPISPYLKQDVKAEPKPLFKHTTSTEIKQEPVPQPDFSLQSPLATEQQRGAKVSRQEPVLNGHVPPLGQSHAAMVAQKALEQEKHAQSTTVPTQTALFDEDAYLENTESEDEYAEETVDEGLDEPRDVLVLHVVAKEGQQLNGAELLPCFLTLNFKYGDMNIFHRHVDNAGNGKVLFSIANMLKPGVFDPDNMEQFSTQGVVFFMTLPCYGDALMNFSIMLNSARQLADDIDAVVLDGQRQPWGEFTKQDYLHRIRANA</sequence>
<proteinExistence type="inferred from homology"/>
<keyword id="KW-0131">Cell cycle</keyword>
<keyword id="KW-0132">Cell division</keyword>
<keyword id="KW-0997">Cell inner membrane</keyword>
<keyword id="KW-1003">Cell membrane</keyword>
<keyword id="KW-0472">Membrane</keyword>
<keyword id="KW-0812">Transmembrane</keyword>
<keyword id="KW-1133">Transmembrane helix</keyword>
<protein>
    <recommendedName>
        <fullName evidence="1">Cell division protein ZipA</fullName>
    </recommendedName>
</protein>
<dbReference type="EMBL" id="CP000503">
    <property type="protein sequence ID" value="ABM24481.1"/>
    <property type="molecule type" value="Genomic_DNA"/>
</dbReference>
<dbReference type="RefSeq" id="WP_011788980.1">
    <property type="nucleotide sequence ID" value="NC_008750.1"/>
</dbReference>
<dbReference type="SMR" id="A1RII6"/>
<dbReference type="KEGG" id="shw:Sputw3181_1644"/>
<dbReference type="HOGENOM" id="CLU_030174_1_0_6"/>
<dbReference type="Proteomes" id="UP000002597">
    <property type="component" value="Chromosome"/>
</dbReference>
<dbReference type="GO" id="GO:0032153">
    <property type="term" value="C:cell division site"/>
    <property type="evidence" value="ECO:0007669"/>
    <property type="project" value="UniProtKB-UniRule"/>
</dbReference>
<dbReference type="GO" id="GO:0005886">
    <property type="term" value="C:plasma membrane"/>
    <property type="evidence" value="ECO:0007669"/>
    <property type="project" value="UniProtKB-SubCell"/>
</dbReference>
<dbReference type="GO" id="GO:0000917">
    <property type="term" value="P:division septum assembly"/>
    <property type="evidence" value="ECO:0007669"/>
    <property type="project" value="TreeGrafter"/>
</dbReference>
<dbReference type="GO" id="GO:0043093">
    <property type="term" value="P:FtsZ-dependent cytokinesis"/>
    <property type="evidence" value="ECO:0007669"/>
    <property type="project" value="UniProtKB-UniRule"/>
</dbReference>
<dbReference type="FunFam" id="3.30.1400.10:FF:000001">
    <property type="entry name" value="Cell division protein ZipA"/>
    <property type="match status" value="1"/>
</dbReference>
<dbReference type="Gene3D" id="3.30.1400.10">
    <property type="entry name" value="ZipA, C-terminal FtsZ-binding domain"/>
    <property type="match status" value="1"/>
</dbReference>
<dbReference type="HAMAP" id="MF_00509">
    <property type="entry name" value="ZipA"/>
    <property type="match status" value="1"/>
</dbReference>
<dbReference type="InterPro" id="IPR011919">
    <property type="entry name" value="Cell_div_ZipA"/>
</dbReference>
<dbReference type="InterPro" id="IPR007449">
    <property type="entry name" value="ZipA_FtsZ-bd_C"/>
</dbReference>
<dbReference type="InterPro" id="IPR036765">
    <property type="entry name" value="ZipA_FtsZ-bd_C_sf"/>
</dbReference>
<dbReference type="NCBIfam" id="TIGR02205">
    <property type="entry name" value="septum_zipA"/>
    <property type="match status" value="1"/>
</dbReference>
<dbReference type="PANTHER" id="PTHR38685">
    <property type="entry name" value="CELL DIVISION PROTEIN ZIPA"/>
    <property type="match status" value="1"/>
</dbReference>
<dbReference type="PANTHER" id="PTHR38685:SF1">
    <property type="entry name" value="CELL DIVISION PROTEIN ZIPA"/>
    <property type="match status" value="1"/>
</dbReference>
<dbReference type="Pfam" id="PF04354">
    <property type="entry name" value="ZipA_C"/>
    <property type="match status" value="1"/>
</dbReference>
<dbReference type="SMART" id="SM00771">
    <property type="entry name" value="ZipA_C"/>
    <property type="match status" value="1"/>
</dbReference>
<dbReference type="SUPFAM" id="SSF64383">
    <property type="entry name" value="Cell-division protein ZipA, C-terminal domain"/>
    <property type="match status" value="1"/>
</dbReference>
<comment type="function">
    <text evidence="1">Essential cell division protein that stabilizes the FtsZ protofilaments by cross-linking them and that serves as a cytoplasmic membrane anchor for the Z ring. Also required for the recruitment to the septal ring of downstream cell division proteins.</text>
</comment>
<comment type="subunit">
    <text evidence="1">Interacts with FtsZ via their C-terminal domains.</text>
</comment>
<comment type="subcellular location">
    <subcellularLocation>
        <location evidence="1">Cell inner membrane</location>
        <topology evidence="1">Single-pass type I membrane protein</topology>
    </subcellularLocation>
    <text evidence="1">Localizes to the Z ring in an FtsZ-dependent manner.</text>
</comment>
<comment type="similarity">
    <text evidence="1">Belongs to the ZipA family.</text>
</comment>